<sequence>MVHYKLMCFDVRGLGEVIRQLFYLGDVSFEDFRVSREEFKSLKSNLPSGQLPVLEIDGVMISQSASIGRFLARQYGYSGKTPTEEMQVDSIIDLFKDFMLTFRQFFFAVIHGYPEYEKERMKRDIVKPAIKNYFIALNKILLRSKSGFLVGDDLTWADLQIADNLSTLINIRLFAEKEPHLNVFIRKL</sequence>
<comment type="function">
    <text evidence="3">Conjugation of reduced glutathione to a wide number of exogenous and endogenous hydrophobic electrophiles.</text>
</comment>
<comment type="catalytic activity">
    <reaction evidence="3">
        <text>RX + glutathione = an S-substituted glutathione + a halide anion + H(+)</text>
        <dbReference type="Rhea" id="RHEA:16437"/>
        <dbReference type="ChEBI" id="CHEBI:15378"/>
        <dbReference type="ChEBI" id="CHEBI:16042"/>
        <dbReference type="ChEBI" id="CHEBI:17792"/>
        <dbReference type="ChEBI" id="CHEBI:57925"/>
        <dbReference type="ChEBI" id="CHEBI:90779"/>
        <dbReference type="EC" id="2.5.1.18"/>
    </reaction>
</comment>
<comment type="similarity">
    <text evidence="4">Belongs to the GST superfamily. Sigma family.</text>
</comment>
<reference evidence="4" key="1">
    <citation type="submission" date="1997-06" db="EMBL/GenBank/DDBJ databases">
        <title>Paraquat mediates differential gene expression in C. elegans.</title>
        <authorList>
            <person name="Tawe W.N."/>
            <person name="Eschbach M.-L."/>
            <person name="Walter R.D."/>
            <person name="Henkle-Duehrsen K."/>
        </authorList>
    </citation>
    <scope>NUCLEOTIDE SEQUENCE [MRNA]</scope>
    <source>
        <strain>Bristol N2</strain>
    </source>
</reference>
<reference key="2">
    <citation type="journal article" date="1998" name="Science">
        <title>Genome sequence of the nematode C. elegans: a platform for investigating biology.</title>
        <authorList>
            <consortium name="The C. elegans sequencing consortium"/>
        </authorList>
    </citation>
    <scope>NUCLEOTIDE SEQUENCE [LARGE SCALE GENOMIC DNA]</scope>
    <source>
        <strain>Bristol N2</strain>
    </source>
</reference>
<gene>
    <name type="primary">gst-2</name>
    <name type="ORF">K08F4.6</name>
</gene>
<feature type="chain" id="PRO_0000185925" description="Glutathione S-transferase 2">
    <location>
        <begin position="1"/>
        <end position="188"/>
    </location>
</feature>
<feature type="domain" description="GST N-terminal">
    <location>
        <begin position="2"/>
        <end position="79"/>
    </location>
</feature>
<feature type="domain" description="GST C-terminal">
    <location>
        <begin position="81"/>
        <end position="188"/>
    </location>
</feature>
<feature type="binding site" evidence="2">
    <location>
        <position position="43"/>
    </location>
    <ligand>
        <name>glutathione</name>
        <dbReference type="ChEBI" id="CHEBI:57925"/>
    </ligand>
</feature>
<feature type="binding site" evidence="1">
    <location>
        <begin position="49"/>
        <end position="51"/>
    </location>
    <ligand>
        <name>glutathione</name>
        <dbReference type="ChEBI" id="CHEBI:57925"/>
    </ligand>
</feature>
<feature type="binding site" evidence="1">
    <location>
        <begin position="63"/>
        <end position="64"/>
    </location>
    <ligand>
        <name>glutathione</name>
        <dbReference type="ChEBI" id="CHEBI:57925"/>
    </ligand>
</feature>
<name>GST2_CAEEL</name>
<proteinExistence type="evidence at transcript level"/>
<evidence type="ECO:0000250" key="1">
    <source>
        <dbReference type="UniProtKB" id="O60760"/>
    </source>
</evidence>
<evidence type="ECO:0000250" key="2">
    <source>
        <dbReference type="UniProtKB" id="P46088"/>
    </source>
</evidence>
<evidence type="ECO:0000250" key="3">
    <source>
        <dbReference type="UniProtKB" id="P46436"/>
    </source>
</evidence>
<evidence type="ECO:0000305" key="4"/>
<accession>O16115</accession>
<accession>Q21356</accession>
<dbReference type="EC" id="2.5.1.18"/>
<dbReference type="EMBL" id="AF010240">
    <property type="protein sequence ID" value="AAB65418.1"/>
    <property type="molecule type" value="mRNA"/>
</dbReference>
<dbReference type="EMBL" id="Z68879">
    <property type="protein sequence ID" value="CAA93087.2"/>
    <property type="molecule type" value="Genomic_DNA"/>
</dbReference>
<dbReference type="PIR" id="T23484">
    <property type="entry name" value="T23484"/>
</dbReference>
<dbReference type="PIR" id="T37463">
    <property type="entry name" value="T37463"/>
</dbReference>
<dbReference type="RefSeq" id="NP_501847.1">
    <property type="nucleotide sequence ID" value="NM_069446.4"/>
</dbReference>
<dbReference type="SMR" id="O16115"/>
<dbReference type="FunCoup" id="O16115">
    <property type="interactions" value="120"/>
</dbReference>
<dbReference type="STRING" id="6239.K08F4.6.1"/>
<dbReference type="PaxDb" id="6239-K08F4.6"/>
<dbReference type="EnsemblMetazoa" id="K08F4.6.1">
    <property type="protein sequence ID" value="K08F4.6.1"/>
    <property type="gene ID" value="WBGene00001750"/>
</dbReference>
<dbReference type="EnsemblMetazoa" id="K08F4.6.2">
    <property type="protein sequence ID" value="K08F4.6.2"/>
    <property type="gene ID" value="WBGene00001750"/>
</dbReference>
<dbReference type="GeneID" id="177884"/>
<dbReference type="KEGG" id="cel:CELE_K08F4.6"/>
<dbReference type="UCSC" id="K08F4.6">
    <property type="organism name" value="c. elegans"/>
</dbReference>
<dbReference type="AGR" id="WB:WBGene00001750"/>
<dbReference type="CTD" id="177884"/>
<dbReference type="WormBase" id="K08F4.6">
    <property type="protein sequence ID" value="CE25051"/>
    <property type="gene ID" value="WBGene00001750"/>
    <property type="gene designation" value="gst-2"/>
</dbReference>
<dbReference type="eggNOG" id="KOG1695">
    <property type="taxonomic scope" value="Eukaryota"/>
</dbReference>
<dbReference type="GeneTree" id="ENSGT00970000196017"/>
<dbReference type="HOGENOM" id="CLU_039475_1_0_1"/>
<dbReference type="InParanoid" id="O16115"/>
<dbReference type="OMA" id="ARTYHIC"/>
<dbReference type="OrthoDB" id="414243at2759"/>
<dbReference type="PhylomeDB" id="O16115"/>
<dbReference type="PRO" id="PR:O16115"/>
<dbReference type="Proteomes" id="UP000001940">
    <property type="component" value="Chromosome IV"/>
</dbReference>
<dbReference type="GO" id="GO:0004364">
    <property type="term" value="F:glutathione transferase activity"/>
    <property type="evidence" value="ECO:0000318"/>
    <property type="project" value="GO_Central"/>
</dbReference>
<dbReference type="GO" id="GO:0006749">
    <property type="term" value="P:glutathione metabolic process"/>
    <property type="evidence" value="ECO:0000318"/>
    <property type="project" value="GO_Central"/>
</dbReference>
<dbReference type="CDD" id="cd03192">
    <property type="entry name" value="GST_C_Sigma_like"/>
    <property type="match status" value="1"/>
</dbReference>
<dbReference type="CDD" id="cd03039">
    <property type="entry name" value="GST_N_Sigma_like"/>
    <property type="match status" value="1"/>
</dbReference>
<dbReference type="FunFam" id="1.20.1050.10:FF:000031">
    <property type="entry name" value="Glutathione S-Transferase"/>
    <property type="match status" value="1"/>
</dbReference>
<dbReference type="FunFam" id="3.40.30.10:FF:000543">
    <property type="entry name" value="Hematopoietic prostaglandin D synthase"/>
    <property type="match status" value="1"/>
</dbReference>
<dbReference type="Gene3D" id="1.20.1050.10">
    <property type="match status" value="1"/>
</dbReference>
<dbReference type="Gene3D" id="3.40.30.10">
    <property type="entry name" value="Glutaredoxin"/>
    <property type="match status" value="1"/>
</dbReference>
<dbReference type="InterPro" id="IPR010987">
    <property type="entry name" value="Glutathione-S-Trfase_C-like"/>
</dbReference>
<dbReference type="InterPro" id="IPR036282">
    <property type="entry name" value="Glutathione-S-Trfase_C_sf"/>
</dbReference>
<dbReference type="InterPro" id="IPR040079">
    <property type="entry name" value="Glutathione_S-Trfase"/>
</dbReference>
<dbReference type="InterPro" id="IPR004045">
    <property type="entry name" value="Glutathione_S-Trfase_N"/>
</dbReference>
<dbReference type="InterPro" id="IPR004046">
    <property type="entry name" value="GST_C"/>
</dbReference>
<dbReference type="InterPro" id="IPR050213">
    <property type="entry name" value="GST_superfamily"/>
</dbReference>
<dbReference type="InterPro" id="IPR036249">
    <property type="entry name" value="Thioredoxin-like_sf"/>
</dbReference>
<dbReference type="PANTHER" id="PTHR11571">
    <property type="entry name" value="GLUTATHIONE S-TRANSFERASE"/>
    <property type="match status" value="1"/>
</dbReference>
<dbReference type="PANTHER" id="PTHR11571:SF44">
    <property type="entry name" value="GLUTATHIONE S-TRANSFERASE 2-RELATED"/>
    <property type="match status" value="1"/>
</dbReference>
<dbReference type="Pfam" id="PF14497">
    <property type="entry name" value="GST_C_3"/>
    <property type="match status" value="1"/>
</dbReference>
<dbReference type="Pfam" id="PF02798">
    <property type="entry name" value="GST_N"/>
    <property type="match status" value="1"/>
</dbReference>
<dbReference type="SFLD" id="SFLDS00019">
    <property type="entry name" value="Glutathione_Transferase_(cytos"/>
    <property type="match status" value="1"/>
</dbReference>
<dbReference type="SUPFAM" id="SSF47616">
    <property type="entry name" value="GST C-terminal domain-like"/>
    <property type="match status" value="1"/>
</dbReference>
<dbReference type="SUPFAM" id="SSF52833">
    <property type="entry name" value="Thioredoxin-like"/>
    <property type="match status" value="1"/>
</dbReference>
<dbReference type="PROSITE" id="PS50405">
    <property type="entry name" value="GST_CTER"/>
    <property type="match status" value="1"/>
</dbReference>
<dbReference type="PROSITE" id="PS50404">
    <property type="entry name" value="GST_NTER"/>
    <property type="match status" value="1"/>
</dbReference>
<protein>
    <recommendedName>
        <fullName>Glutathione S-transferase 2</fullName>
        <ecNumber>2.5.1.18</ecNumber>
    </recommendedName>
    <alternativeName>
        <fullName>CeGST2</fullName>
    </alternativeName>
    <alternativeName>
        <fullName>GST class-sigma</fullName>
    </alternativeName>
</protein>
<organism>
    <name type="scientific">Caenorhabditis elegans</name>
    <dbReference type="NCBI Taxonomy" id="6239"/>
    <lineage>
        <taxon>Eukaryota</taxon>
        <taxon>Metazoa</taxon>
        <taxon>Ecdysozoa</taxon>
        <taxon>Nematoda</taxon>
        <taxon>Chromadorea</taxon>
        <taxon>Rhabditida</taxon>
        <taxon>Rhabditina</taxon>
        <taxon>Rhabditomorpha</taxon>
        <taxon>Rhabditoidea</taxon>
        <taxon>Rhabditidae</taxon>
        <taxon>Peloderinae</taxon>
        <taxon>Caenorhabditis</taxon>
    </lineage>
</organism>
<keyword id="KW-1185">Reference proteome</keyword>
<keyword id="KW-0808">Transferase</keyword>